<keyword id="KW-0903">Direct protein sequencing</keyword>
<protein>
    <recommendedName>
        <fullName>Unknown protein NF019 from 2D-PAGE</fullName>
    </recommendedName>
</protein>
<reference evidence="1" key="1">
    <citation type="submission" date="2004-04" db="UniProtKB">
        <title>Comparative study of protein profiles on pathogenic and nonpathogenic Naegleria species by 2D-PAGE.</title>
        <authorList>
            <person name="Omura M."/>
            <person name="Furushima-Shimogawara R."/>
            <person name="Izumiyama S."/>
            <person name="Endo T."/>
        </authorList>
    </citation>
    <scope>PROTEIN SEQUENCE</scope>
    <source>
        <strain evidence="1">ATCC 30214 / Nf 66</strain>
    </source>
</reference>
<evidence type="ECO:0000305" key="1"/>
<comment type="miscellaneous">
    <text evidence="1">On the 2D-gel the determined pI of this protein is: 7.2, its MW is: 92.4 kDa.</text>
</comment>
<proteinExistence type="evidence at protein level"/>
<accession>P83899</accession>
<sequence length="20" mass="2392">KRTKAPFSRVVKFSIDEIRN</sequence>
<name>NF19_NAEFO</name>
<organism evidence="1">
    <name type="scientific">Naegleria fowleri</name>
    <name type="common">Brain eating amoeba</name>
    <dbReference type="NCBI Taxonomy" id="5763"/>
    <lineage>
        <taxon>Eukaryota</taxon>
        <taxon>Discoba</taxon>
        <taxon>Heterolobosea</taxon>
        <taxon>Tetramitia</taxon>
        <taxon>Eutetramitia</taxon>
        <taxon>Vahlkampfiidae</taxon>
        <taxon>Naegleria</taxon>
    </lineage>
</organism>
<feature type="chain" id="PRO_0000055492" description="Unknown protein NF019 from 2D-PAGE">
    <location>
        <begin position="1"/>
        <end position="20" status="greater than"/>
    </location>
</feature>
<feature type="non-terminal residue" evidence="1">
    <location>
        <position position="20"/>
    </location>
</feature>